<keyword id="KW-0012">Acyltransferase</keyword>
<keyword id="KW-0963">Cytoplasm</keyword>
<keyword id="KW-0408">Iron</keyword>
<keyword id="KW-0479">Metal-binding</keyword>
<keyword id="KW-0808">Transferase</keyword>
<keyword id="KW-0819">tRNA processing</keyword>
<accession>A3P7W1</accession>
<reference key="1">
    <citation type="journal article" date="2010" name="Genome Biol. Evol.">
        <title>Continuing evolution of Burkholderia mallei through genome reduction and large-scale rearrangements.</title>
        <authorList>
            <person name="Losada L."/>
            <person name="Ronning C.M."/>
            <person name="DeShazer D."/>
            <person name="Woods D."/>
            <person name="Fedorova N."/>
            <person name="Kim H.S."/>
            <person name="Shabalina S.A."/>
            <person name="Pearson T.R."/>
            <person name="Brinkac L."/>
            <person name="Tan P."/>
            <person name="Nandi T."/>
            <person name="Crabtree J."/>
            <person name="Badger J."/>
            <person name="Beckstrom-Sternberg S."/>
            <person name="Saqib M."/>
            <person name="Schutzer S.E."/>
            <person name="Keim P."/>
            <person name="Nierman W.C."/>
        </authorList>
    </citation>
    <scope>NUCLEOTIDE SEQUENCE [LARGE SCALE GENOMIC DNA]</scope>
    <source>
        <strain>1106a</strain>
    </source>
</reference>
<protein>
    <recommendedName>
        <fullName evidence="1">tRNA N6-adenosine threonylcarbamoyltransferase</fullName>
        <ecNumber evidence="1">2.3.1.234</ecNumber>
    </recommendedName>
    <alternativeName>
        <fullName evidence="1">N6-L-threonylcarbamoyladenine synthase</fullName>
        <shortName evidence="1">t(6)A synthase</shortName>
    </alternativeName>
    <alternativeName>
        <fullName evidence="1">t(6)A37 threonylcarbamoyladenosine biosynthesis protein TsaD</fullName>
    </alternativeName>
    <alternativeName>
        <fullName evidence="1">tRNA threonylcarbamoyladenosine biosynthesis protein TsaD</fullName>
    </alternativeName>
</protein>
<name>TSAD_BURP0</name>
<comment type="function">
    <text evidence="1">Required for the formation of a threonylcarbamoyl group on adenosine at position 37 (t(6)A37) in tRNAs that read codons beginning with adenine. Is involved in the transfer of the threonylcarbamoyl moiety of threonylcarbamoyl-AMP (TC-AMP) to the N6 group of A37, together with TsaE and TsaB. TsaD likely plays a direct catalytic role in this reaction.</text>
</comment>
<comment type="catalytic activity">
    <reaction evidence="1">
        <text>L-threonylcarbamoyladenylate + adenosine(37) in tRNA = N(6)-L-threonylcarbamoyladenosine(37) in tRNA + AMP + H(+)</text>
        <dbReference type="Rhea" id="RHEA:37059"/>
        <dbReference type="Rhea" id="RHEA-COMP:10162"/>
        <dbReference type="Rhea" id="RHEA-COMP:10163"/>
        <dbReference type="ChEBI" id="CHEBI:15378"/>
        <dbReference type="ChEBI" id="CHEBI:73682"/>
        <dbReference type="ChEBI" id="CHEBI:74411"/>
        <dbReference type="ChEBI" id="CHEBI:74418"/>
        <dbReference type="ChEBI" id="CHEBI:456215"/>
        <dbReference type="EC" id="2.3.1.234"/>
    </reaction>
</comment>
<comment type="cofactor">
    <cofactor evidence="1">
        <name>Fe(2+)</name>
        <dbReference type="ChEBI" id="CHEBI:29033"/>
    </cofactor>
    <text evidence="1">Binds 1 Fe(2+) ion per subunit.</text>
</comment>
<comment type="subcellular location">
    <subcellularLocation>
        <location evidence="1">Cytoplasm</location>
    </subcellularLocation>
</comment>
<comment type="similarity">
    <text evidence="1">Belongs to the KAE1 / TsaD family.</text>
</comment>
<comment type="sequence caution" evidence="2">
    <conflict type="erroneous initiation">
        <sequence resource="EMBL-CDS" id="ABN94856"/>
    </conflict>
</comment>
<gene>
    <name evidence="1" type="primary">tsaD</name>
    <name type="synonym">gcp</name>
    <name type="ordered locus">BURPS1106A_A2389</name>
</gene>
<feature type="chain" id="PRO_0000303304" description="tRNA N6-adenosine threonylcarbamoyltransferase">
    <location>
        <begin position="1"/>
        <end position="346"/>
    </location>
</feature>
<feature type="binding site" evidence="1">
    <location>
        <position position="111"/>
    </location>
    <ligand>
        <name>Fe cation</name>
        <dbReference type="ChEBI" id="CHEBI:24875"/>
    </ligand>
</feature>
<feature type="binding site" evidence="1">
    <location>
        <position position="115"/>
    </location>
    <ligand>
        <name>Fe cation</name>
        <dbReference type="ChEBI" id="CHEBI:24875"/>
    </ligand>
</feature>
<feature type="binding site" evidence="1">
    <location>
        <begin position="134"/>
        <end position="138"/>
    </location>
    <ligand>
        <name>substrate</name>
    </ligand>
</feature>
<feature type="binding site" evidence="1">
    <location>
        <position position="167"/>
    </location>
    <ligand>
        <name>substrate</name>
    </ligand>
</feature>
<feature type="binding site" evidence="1">
    <location>
        <position position="180"/>
    </location>
    <ligand>
        <name>substrate</name>
    </ligand>
</feature>
<feature type="binding site" evidence="1">
    <location>
        <position position="279"/>
    </location>
    <ligand>
        <name>substrate</name>
    </ligand>
</feature>
<feature type="binding site" evidence="1">
    <location>
        <position position="307"/>
    </location>
    <ligand>
        <name>Fe cation</name>
        <dbReference type="ChEBI" id="CHEBI:24875"/>
    </ligand>
</feature>
<sequence length="346" mass="36337">MLVLGIESSCDETGLALYDTERGLLAHALHSQIAMHREYGGVVPELASRDHIRRALPLLEEVLAASGARRDDIDAIAFTQGPGLAGALLVGASIANALAFAWDKPTIGIHHLEGHLLSPLLVAEPPPFPFVALLVSGGHTQLMRVSDVGVYETLGETLDDAAGEAFDKTAKLLGLGYPGGPEVSRLAEAGTPGAVVLPRPMLHSGDLDFSFSGLKTAVLTQMKKLEAAHAGGAVLERAKADFARGFVDAAVDVLVAKSLAALKATRLKRLVVAGGVGANRQLRAALSAAAQKRGFDVHYPDLALCTDNGAMIALAGALRLARWPSQASRDYAFTVKPRWDLASLAR</sequence>
<proteinExistence type="inferred from homology"/>
<evidence type="ECO:0000255" key="1">
    <source>
        <dbReference type="HAMAP-Rule" id="MF_01445"/>
    </source>
</evidence>
<evidence type="ECO:0000305" key="2"/>
<dbReference type="EC" id="2.3.1.234" evidence="1"/>
<dbReference type="EMBL" id="CP000573">
    <property type="protein sequence ID" value="ABN94856.1"/>
    <property type="status" value="ALT_INIT"/>
    <property type="molecule type" value="Genomic_DNA"/>
</dbReference>
<dbReference type="RefSeq" id="WP_004552017.1">
    <property type="nucleotide sequence ID" value="NC_009078.1"/>
</dbReference>
<dbReference type="SMR" id="A3P7W1"/>
<dbReference type="GeneID" id="93063967"/>
<dbReference type="KEGG" id="bpl:BURPS1106A_A2389"/>
<dbReference type="HOGENOM" id="CLU_023208_0_0_4"/>
<dbReference type="Proteomes" id="UP000006738">
    <property type="component" value="Chromosome II"/>
</dbReference>
<dbReference type="GO" id="GO:0005737">
    <property type="term" value="C:cytoplasm"/>
    <property type="evidence" value="ECO:0007669"/>
    <property type="project" value="UniProtKB-SubCell"/>
</dbReference>
<dbReference type="GO" id="GO:0005506">
    <property type="term" value="F:iron ion binding"/>
    <property type="evidence" value="ECO:0007669"/>
    <property type="project" value="UniProtKB-UniRule"/>
</dbReference>
<dbReference type="GO" id="GO:0061711">
    <property type="term" value="F:N(6)-L-threonylcarbamoyladenine synthase activity"/>
    <property type="evidence" value="ECO:0007669"/>
    <property type="project" value="UniProtKB-EC"/>
</dbReference>
<dbReference type="GO" id="GO:0002949">
    <property type="term" value="P:tRNA threonylcarbamoyladenosine modification"/>
    <property type="evidence" value="ECO:0007669"/>
    <property type="project" value="UniProtKB-UniRule"/>
</dbReference>
<dbReference type="CDD" id="cd24133">
    <property type="entry name" value="ASKHA_NBD_TsaD_bac"/>
    <property type="match status" value="1"/>
</dbReference>
<dbReference type="FunFam" id="3.30.420.40:FF:000012">
    <property type="entry name" value="tRNA N6-adenosine threonylcarbamoyltransferase"/>
    <property type="match status" value="1"/>
</dbReference>
<dbReference type="FunFam" id="3.30.420.40:FF:000040">
    <property type="entry name" value="tRNA N6-adenosine threonylcarbamoyltransferase"/>
    <property type="match status" value="1"/>
</dbReference>
<dbReference type="Gene3D" id="3.30.420.40">
    <property type="match status" value="2"/>
</dbReference>
<dbReference type="HAMAP" id="MF_01445">
    <property type="entry name" value="TsaD"/>
    <property type="match status" value="1"/>
</dbReference>
<dbReference type="InterPro" id="IPR043129">
    <property type="entry name" value="ATPase_NBD"/>
</dbReference>
<dbReference type="InterPro" id="IPR000905">
    <property type="entry name" value="Gcp-like_dom"/>
</dbReference>
<dbReference type="InterPro" id="IPR017861">
    <property type="entry name" value="KAE1/TsaD"/>
</dbReference>
<dbReference type="InterPro" id="IPR022450">
    <property type="entry name" value="TsaD"/>
</dbReference>
<dbReference type="NCBIfam" id="TIGR00329">
    <property type="entry name" value="gcp_kae1"/>
    <property type="match status" value="1"/>
</dbReference>
<dbReference type="NCBIfam" id="TIGR03723">
    <property type="entry name" value="T6A_TsaD_YgjD"/>
    <property type="match status" value="1"/>
</dbReference>
<dbReference type="PANTHER" id="PTHR11735">
    <property type="entry name" value="TRNA N6-ADENOSINE THREONYLCARBAMOYLTRANSFERASE"/>
    <property type="match status" value="1"/>
</dbReference>
<dbReference type="PANTHER" id="PTHR11735:SF6">
    <property type="entry name" value="TRNA N6-ADENOSINE THREONYLCARBAMOYLTRANSFERASE, MITOCHONDRIAL"/>
    <property type="match status" value="1"/>
</dbReference>
<dbReference type="Pfam" id="PF00814">
    <property type="entry name" value="TsaD"/>
    <property type="match status" value="1"/>
</dbReference>
<dbReference type="PRINTS" id="PR00789">
    <property type="entry name" value="OSIALOPTASE"/>
</dbReference>
<dbReference type="SUPFAM" id="SSF53067">
    <property type="entry name" value="Actin-like ATPase domain"/>
    <property type="match status" value="2"/>
</dbReference>
<organism>
    <name type="scientific">Burkholderia pseudomallei (strain 1106a)</name>
    <dbReference type="NCBI Taxonomy" id="357348"/>
    <lineage>
        <taxon>Bacteria</taxon>
        <taxon>Pseudomonadati</taxon>
        <taxon>Pseudomonadota</taxon>
        <taxon>Betaproteobacteria</taxon>
        <taxon>Burkholderiales</taxon>
        <taxon>Burkholderiaceae</taxon>
        <taxon>Burkholderia</taxon>
        <taxon>pseudomallei group</taxon>
    </lineage>
</organism>